<protein>
    <recommendedName>
        <fullName evidence="4">8-amino-3,8-dideoxy-alpha-D-manno-octulosonate transaminase</fullName>
        <ecNumber evidence="2">2.6.1.109</ecNumber>
    </recommendedName>
</protein>
<accession>Q8EEB1</accession>
<keyword id="KW-0002">3D-structure</keyword>
<keyword id="KW-0032">Aminotransferase</keyword>
<keyword id="KW-0448">Lipopolysaccharide biosynthesis</keyword>
<keyword id="KW-0663">Pyridoxal phosphate</keyword>
<keyword id="KW-1185">Reference proteome</keyword>
<keyword id="KW-0808">Transferase</keyword>
<sequence>MPGFELFGPEEKQEVADVMEHGFTFRYNFDHMRNDRWKTRDMEQLLCEKMNVKHAHLLSSGTAALQTAMMAAGIGAGDEVIVPPFTFVASVEAIFMAGAVPIFAEIDETLCLSPEGIEAVITPRTKAINLVHMCGSMAKMDEIKAICKKHNLVLLEDACQAIGGSYKGQALGTIGDVGCYSFDSVKTITCGEGGAVITNNTEIYDNAHMFSDHGHDHIGKDRGAESHPIMGLNFRISEMNAALGLAQLRKLDTIIDIQRKNKKAIKDAMASIPEVSFREIPDPEGDSAGFLSFMLPTEARTQEISKKLAANGVDGCFYWYVNNWHYLKNWKHIQELKAPAALPITLIADRPDYTQISVPKSDAIMSRTISMLIKLSWTDAQIAERIENIKKAFAQ</sequence>
<dbReference type="EC" id="2.6.1.109" evidence="2"/>
<dbReference type="EMBL" id="AE014299">
    <property type="protein sequence ID" value="AAN55507.1"/>
    <property type="molecule type" value="Genomic_DNA"/>
</dbReference>
<dbReference type="RefSeq" id="NP_718063.1">
    <property type="nucleotide sequence ID" value="NC_004347.2"/>
</dbReference>
<dbReference type="RefSeq" id="WP_011072442.1">
    <property type="nucleotide sequence ID" value="NC_004347.2"/>
</dbReference>
<dbReference type="PDB" id="5K8B">
    <property type="method" value="X-ray"/>
    <property type="resolution" value="2.15 A"/>
    <property type="chains" value="A/B/C/D=1-395"/>
</dbReference>
<dbReference type="PDBsum" id="5K8B"/>
<dbReference type="SMR" id="Q8EEB1"/>
<dbReference type="STRING" id="211586.SO_2476"/>
<dbReference type="PaxDb" id="211586-SO_2476"/>
<dbReference type="KEGG" id="son:SO_2476"/>
<dbReference type="PATRIC" id="fig|211586.12.peg.2385"/>
<dbReference type="eggNOG" id="COG0399">
    <property type="taxonomic scope" value="Bacteria"/>
</dbReference>
<dbReference type="HOGENOM" id="CLU_033332_7_2_6"/>
<dbReference type="OrthoDB" id="9804264at2"/>
<dbReference type="PhylomeDB" id="Q8EEB1"/>
<dbReference type="BioCyc" id="MetaCyc:MONOMER-19349"/>
<dbReference type="BioCyc" id="SONE211586:G1GMP-2262-MONOMER"/>
<dbReference type="BRENDA" id="2.6.1.109">
    <property type="organism ID" value="5706"/>
</dbReference>
<dbReference type="UniPathway" id="UPA00030"/>
<dbReference type="EvolutionaryTrace" id="Q8EEB1"/>
<dbReference type="Proteomes" id="UP000008186">
    <property type="component" value="Chromosome"/>
</dbReference>
<dbReference type="GO" id="GO:0030170">
    <property type="term" value="F:pyridoxal phosphate binding"/>
    <property type="evidence" value="ECO:0000318"/>
    <property type="project" value="GO_Central"/>
</dbReference>
<dbReference type="GO" id="GO:0008483">
    <property type="term" value="F:transaminase activity"/>
    <property type="evidence" value="ECO:0000318"/>
    <property type="project" value="GO_Central"/>
</dbReference>
<dbReference type="GO" id="GO:0009103">
    <property type="term" value="P:lipopolysaccharide biosynthetic process"/>
    <property type="evidence" value="ECO:0007669"/>
    <property type="project" value="UniProtKB-UniPathway"/>
</dbReference>
<dbReference type="GO" id="GO:0000271">
    <property type="term" value="P:polysaccharide biosynthetic process"/>
    <property type="evidence" value="ECO:0000318"/>
    <property type="project" value="GO_Central"/>
</dbReference>
<dbReference type="CDD" id="cd00616">
    <property type="entry name" value="AHBA_syn"/>
    <property type="match status" value="1"/>
</dbReference>
<dbReference type="FunFam" id="3.40.640.10:FF:000343">
    <property type="entry name" value="8-amino-3,8-dideoxy-alpha-D-manno-octulosonate transaminase"/>
    <property type="match status" value="1"/>
</dbReference>
<dbReference type="Gene3D" id="3.90.1150.10">
    <property type="entry name" value="Aspartate Aminotransferase, domain 1"/>
    <property type="match status" value="1"/>
</dbReference>
<dbReference type="Gene3D" id="3.40.640.10">
    <property type="entry name" value="Type I PLP-dependent aspartate aminotransferase-like (Major domain)"/>
    <property type="match status" value="1"/>
</dbReference>
<dbReference type="InterPro" id="IPR000653">
    <property type="entry name" value="DegT/StrS_aminotransferase"/>
</dbReference>
<dbReference type="InterPro" id="IPR015424">
    <property type="entry name" value="PyrdxlP-dep_Trfase"/>
</dbReference>
<dbReference type="InterPro" id="IPR015421">
    <property type="entry name" value="PyrdxlP-dep_Trfase_major"/>
</dbReference>
<dbReference type="InterPro" id="IPR015422">
    <property type="entry name" value="PyrdxlP-dep_Trfase_small"/>
</dbReference>
<dbReference type="PANTHER" id="PTHR30244:SF34">
    <property type="entry name" value="DTDP-4-AMINO-4,6-DIDEOXYGALACTOSE TRANSAMINASE"/>
    <property type="match status" value="1"/>
</dbReference>
<dbReference type="PANTHER" id="PTHR30244">
    <property type="entry name" value="TRANSAMINASE"/>
    <property type="match status" value="1"/>
</dbReference>
<dbReference type="Pfam" id="PF01041">
    <property type="entry name" value="DegT_DnrJ_EryC1"/>
    <property type="match status" value="1"/>
</dbReference>
<dbReference type="PIRSF" id="PIRSF000390">
    <property type="entry name" value="PLP_StrS"/>
    <property type="match status" value="1"/>
</dbReference>
<dbReference type="SUPFAM" id="SSF53383">
    <property type="entry name" value="PLP-dependent transferases"/>
    <property type="match status" value="1"/>
</dbReference>
<comment type="function">
    <text evidence="2">Catalyzes the second (last) step of the biosynthesis of Kdo8N (8-amino-3,8-dideoxy-D-manno-octulosonate) from Kdo (3-deoxy-D-manno-octulosonate).</text>
</comment>
<comment type="catalytic activity">
    <reaction evidence="2">
        <text>8-amino-3,8-dideoxy-alpha-D-manno-octulosonate + 2-oxoglutarate = 3,8-dideoxy-8-oxo-alpha-D-manno-octulosonate + L-glutamate</text>
        <dbReference type="Rhea" id="RHEA:46892"/>
        <dbReference type="ChEBI" id="CHEBI:16810"/>
        <dbReference type="ChEBI" id="CHEBI:29985"/>
        <dbReference type="ChEBI" id="CHEBI:87090"/>
        <dbReference type="ChEBI" id="CHEBI:87091"/>
        <dbReference type="EC" id="2.6.1.109"/>
    </reaction>
</comment>
<comment type="cofactor">
    <cofactor evidence="2">
        <name>pyridoxal 5'-phosphate</name>
        <dbReference type="ChEBI" id="CHEBI:597326"/>
    </cofactor>
</comment>
<comment type="pathway">
    <text evidence="2">Bacterial outer membrane biogenesis; lipopolysaccharide biosynthesis.</text>
</comment>
<comment type="disruption phenotype">
    <text evidence="2">A double kdnA/kdnB deletion mutant shows increased sensitivity to polymyxin B and bile salts.</text>
</comment>
<comment type="miscellaneous">
    <text evidence="5">Kdo8N is found in lipopolysaccharides of members of the Shewanella genus.</text>
</comment>
<comment type="similarity">
    <text evidence="4">Belongs to the DegT/DnrJ/EryC1 family.</text>
</comment>
<evidence type="ECO:0000250" key="1">
    <source>
        <dbReference type="UniProtKB" id="Q8ZNF3"/>
    </source>
</evidence>
<evidence type="ECO:0000269" key="2">
    <source>
    </source>
</evidence>
<evidence type="ECO:0000303" key="3">
    <source>
    </source>
</evidence>
<evidence type="ECO:0000305" key="4"/>
<evidence type="ECO:0000305" key="5">
    <source>
    </source>
</evidence>
<evidence type="ECO:0000312" key="6">
    <source>
        <dbReference type="EMBL" id="AAN55507.1"/>
    </source>
</evidence>
<evidence type="ECO:0007829" key="7">
    <source>
        <dbReference type="PDB" id="5K8B"/>
    </source>
</evidence>
<gene>
    <name evidence="3" type="primary">kdnA</name>
    <name evidence="6" type="ordered locus">SO_2476</name>
</gene>
<reference key="1">
    <citation type="journal article" date="2002" name="Nat. Biotechnol.">
        <title>Genome sequence of the dissimilatory metal ion-reducing bacterium Shewanella oneidensis.</title>
        <authorList>
            <person name="Heidelberg J.F."/>
            <person name="Paulsen I.T."/>
            <person name="Nelson K.E."/>
            <person name="Gaidos E.J."/>
            <person name="Nelson W.C."/>
            <person name="Read T.D."/>
            <person name="Eisen J.A."/>
            <person name="Seshadri R."/>
            <person name="Ward N.L."/>
            <person name="Methe B.A."/>
            <person name="Clayton R.A."/>
            <person name="Meyer T."/>
            <person name="Tsapin A."/>
            <person name="Scott J."/>
            <person name="Beanan M.J."/>
            <person name="Brinkac L.M."/>
            <person name="Daugherty S.C."/>
            <person name="DeBoy R.T."/>
            <person name="Dodson R.J."/>
            <person name="Durkin A.S."/>
            <person name="Haft D.H."/>
            <person name="Kolonay J.F."/>
            <person name="Madupu R."/>
            <person name="Peterson J.D."/>
            <person name="Umayam L.A."/>
            <person name="White O."/>
            <person name="Wolf A.M."/>
            <person name="Vamathevan J.J."/>
            <person name="Weidman J.F."/>
            <person name="Impraim M."/>
            <person name="Lee K."/>
            <person name="Berry K.J."/>
            <person name="Lee C."/>
            <person name="Mueller J."/>
            <person name="Khouri H.M."/>
            <person name="Gill J."/>
            <person name="Utterback T.R."/>
            <person name="McDonald L.A."/>
            <person name="Feldblyum T.V."/>
            <person name="Smith H.O."/>
            <person name="Venter J.C."/>
            <person name="Nealson K.H."/>
            <person name="Fraser C.M."/>
        </authorList>
    </citation>
    <scope>NUCLEOTIDE SEQUENCE [LARGE SCALE GENOMIC DNA]</scope>
    <source>
        <strain>ATCC 700550 / JCM 31522 / CIP 106686 / LMG 19005 / NCIMB 14063 / MR-1</strain>
    </source>
</reference>
<reference key="2">
    <citation type="journal article" date="2013" name="J. Biol. Chem.">
        <title>The origin of 8-amino-3,8-dideoxy-D-manno-octulosonic acid (Kdo8N) in the lipopolysaccharide of Shewanella oneidensis.</title>
        <authorList>
            <person name="Gattis S.G."/>
            <person name="Chung H.S."/>
            <person name="Trent M.S."/>
            <person name="Raetz C.R."/>
        </authorList>
    </citation>
    <scope>FUNCTION</scope>
    <scope>CATALYTIC ACTIVITY</scope>
    <scope>COFACTOR</scope>
    <scope>PATHWAY</scope>
    <scope>DISRUPTION PHENOTYPE</scope>
    <source>
        <strain>ATCC 700550 / JCM 31522 / CIP 106686 / LMG 19005 / NCIMB 14063 / MR-1</strain>
    </source>
</reference>
<name>KDNA_SHEON</name>
<feature type="chain" id="PRO_0000434590" description="8-amino-3,8-dideoxy-alpha-D-manno-octulosonate transaminase">
    <location>
        <begin position="1"/>
        <end position="395"/>
    </location>
</feature>
<feature type="modified residue" description="N6-(pyridoxal phosphate)lysine" evidence="1">
    <location>
        <position position="186"/>
    </location>
</feature>
<feature type="helix" evidence="7">
    <location>
        <begin position="3"/>
        <end position="6"/>
    </location>
</feature>
<feature type="helix" evidence="7">
    <location>
        <begin position="9"/>
        <end position="20"/>
    </location>
</feature>
<feature type="strand" evidence="7">
    <location>
        <begin position="24"/>
        <end position="27"/>
    </location>
</feature>
<feature type="helix" evidence="7">
    <location>
        <begin position="30"/>
        <end position="33"/>
    </location>
</feature>
<feature type="helix" evidence="7">
    <location>
        <begin position="38"/>
        <end position="50"/>
    </location>
</feature>
<feature type="strand" evidence="7">
    <location>
        <begin position="53"/>
        <end position="59"/>
    </location>
</feature>
<feature type="helix" evidence="7">
    <location>
        <begin position="61"/>
        <end position="71"/>
    </location>
</feature>
<feature type="strand" evidence="7">
    <location>
        <begin position="79"/>
        <end position="82"/>
    </location>
</feature>
<feature type="strand" evidence="7">
    <location>
        <begin position="84"/>
        <end position="86"/>
    </location>
</feature>
<feature type="helix" evidence="7">
    <location>
        <begin position="89"/>
        <end position="96"/>
    </location>
</feature>
<feature type="strand" evidence="7">
    <location>
        <begin position="100"/>
        <end position="103"/>
    </location>
</feature>
<feature type="strand" evidence="7">
    <location>
        <begin position="110"/>
        <end position="112"/>
    </location>
</feature>
<feature type="helix" evidence="7">
    <location>
        <begin position="114"/>
        <end position="120"/>
    </location>
</feature>
<feature type="strand" evidence="7">
    <location>
        <begin position="125"/>
        <end position="131"/>
    </location>
</feature>
<feature type="helix" evidence="7">
    <location>
        <begin position="133"/>
        <end position="135"/>
    </location>
</feature>
<feature type="helix" evidence="7">
    <location>
        <begin position="140"/>
        <end position="149"/>
    </location>
</feature>
<feature type="strand" evidence="7">
    <location>
        <begin position="153"/>
        <end position="157"/>
    </location>
</feature>
<feature type="strand" evidence="7">
    <location>
        <begin position="173"/>
        <end position="181"/>
    </location>
</feature>
<feature type="strand" evidence="7">
    <location>
        <begin position="186"/>
        <end position="188"/>
    </location>
</feature>
<feature type="strand" evidence="7">
    <location>
        <begin position="194"/>
        <end position="199"/>
    </location>
</feature>
<feature type="helix" evidence="7">
    <location>
        <begin position="201"/>
        <end position="210"/>
    </location>
</feature>
<feature type="turn" evidence="7">
    <location>
        <begin position="222"/>
        <end position="224"/>
    </location>
</feature>
<feature type="helix" evidence="7">
    <location>
        <begin position="238"/>
        <end position="248"/>
    </location>
</feature>
<feature type="helix" evidence="7">
    <location>
        <begin position="251"/>
        <end position="269"/>
    </location>
</feature>
<feature type="helix" evidence="7">
    <location>
        <begin position="283"/>
        <end position="285"/>
    </location>
</feature>
<feature type="strand" evidence="7">
    <location>
        <begin position="289"/>
        <end position="294"/>
    </location>
</feature>
<feature type="helix" evidence="7">
    <location>
        <begin position="298"/>
        <end position="310"/>
    </location>
</feature>
<feature type="strand" evidence="7">
    <location>
        <begin position="315"/>
        <end position="317"/>
    </location>
</feature>
<feature type="helix" evidence="7">
    <location>
        <begin position="319"/>
        <end position="321"/>
    </location>
</feature>
<feature type="strand" evidence="7">
    <location>
        <begin position="322"/>
        <end position="326"/>
    </location>
</feature>
<feature type="helix" evidence="7">
    <location>
        <begin position="327"/>
        <end position="329"/>
    </location>
</feature>
<feature type="helix" evidence="7">
    <location>
        <begin position="331"/>
        <end position="334"/>
    </location>
</feature>
<feature type="helix" evidence="7">
    <location>
        <begin position="343"/>
        <end position="346"/>
    </location>
</feature>
<feature type="helix" evidence="7">
    <location>
        <begin position="353"/>
        <end position="355"/>
    </location>
</feature>
<feature type="helix" evidence="7">
    <location>
        <begin position="359"/>
        <end position="365"/>
    </location>
</feature>
<feature type="strand" evidence="7">
    <location>
        <begin position="368"/>
        <end position="372"/>
    </location>
</feature>
<feature type="helix" evidence="7">
    <location>
        <begin position="379"/>
        <end position="393"/>
    </location>
</feature>
<organism>
    <name type="scientific">Shewanella oneidensis (strain ATCC 700550 / JCM 31522 / CIP 106686 / LMG 19005 / NCIMB 14063 / MR-1)</name>
    <dbReference type="NCBI Taxonomy" id="211586"/>
    <lineage>
        <taxon>Bacteria</taxon>
        <taxon>Pseudomonadati</taxon>
        <taxon>Pseudomonadota</taxon>
        <taxon>Gammaproteobacteria</taxon>
        <taxon>Alteromonadales</taxon>
        <taxon>Shewanellaceae</taxon>
        <taxon>Shewanella</taxon>
    </lineage>
</organism>
<proteinExistence type="evidence at protein level"/>